<proteinExistence type="inferred from homology"/>
<comment type="function">
    <text evidence="1">Major role in the synthesis of nucleoside triphosphates other than ATP. The ATP gamma phosphate is transferred to the NDP beta phosphate via a ping-pong mechanism, using a phosphorylated active-site intermediate.</text>
</comment>
<comment type="catalytic activity">
    <reaction evidence="1">
        <text>a 2'-deoxyribonucleoside 5'-diphosphate + ATP = a 2'-deoxyribonucleoside 5'-triphosphate + ADP</text>
        <dbReference type="Rhea" id="RHEA:44640"/>
        <dbReference type="ChEBI" id="CHEBI:30616"/>
        <dbReference type="ChEBI" id="CHEBI:61560"/>
        <dbReference type="ChEBI" id="CHEBI:73316"/>
        <dbReference type="ChEBI" id="CHEBI:456216"/>
        <dbReference type="EC" id="2.7.4.6"/>
    </reaction>
</comment>
<comment type="catalytic activity">
    <reaction evidence="1">
        <text>a ribonucleoside 5'-diphosphate + ATP = a ribonucleoside 5'-triphosphate + ADP</text>
        <dbReference type="Rhea" id="RHEA:18113"/>
        <dbReference type="ChEBI" id="CHEBI:30616"/>
        <dbReference type="ChEBI" id="CHEBI:57930"/>
        <dbReference type="ChEBI" id="CHEBI:61557"/>
        <dbReference type="ChEBI" id="CHEBI:456216"/>
        <dbReference type="EC" id="2.7.4.6"/>
    </reaction>
</comment>
<comment type="cofactor">
    <cofactor evidence="1">
        <name>Mg(2+)</name>
        <dbReference type="ChEBI" id="CHEBI:18420"/>
    </cofactor>
</comment>
<comment type="subunit">
    <text evidence="1">Homotetramer.</text>
</comment>
<comment type="subcellular location">
    <subcellularLocation>
        <location evidence="1">Cytoplasm</location>
    </subcellularLocation>
</comment>
<comment type="similarity">
    <text evidence="1">Belongs to the NDK family.</text>
</comment>
<reference key="1">
    <citation type="submission" date="2007-04" db="EMBL/GenBank/DDBJ databases">
        <title>Complete sequence of Shewanella putrefaciens CN-32.</title>
        <authorList>
            <consortium name="US DOE Joint Genome Institute"/>
            <person name="Copeland A."/>
            <person name="Lucas S."/>
            <person name="Lapidus A."/>
            <person name="Barry K."/>
            <person name="Detter J.C."/>
            <person name="Glavina del Rio T."/>
            <person name="Hammon N."/>
            <person name="Israni S."/>
            <person name="Dalin E."/>
            <person name="Tice H."/>
            <person name="Pitluck S."/>
            <person name="Chain P."/>
            <person name="Malfatti S."/>
            <person name="Shin M."/>
            <person name="Vergez L."/>
            <person name="Schmutz J."/>
            <person name="Larimer F."/>
            <person name="Land M."/>
            <person name="Hauser L."/>
            <person name="Kyrpides N."/>
            <person name="Mikhailova N."/>
            <person name="Romine M.F."/>
            <person name="Fredrickson J."/>
            <person name="Tiedje J."/>
            <person name="Richardson P."/>
        </authorList>
    </citation>
    <scope>NUCLEOTIDE SEQUENCE [LARGE SCALE GENOMIC DNA]</scope>
    <source>
        <strain>CN-32 / ATCC BAA-453</strain>
    </source>
</reference>
<dbReference type="EC" id="2.7.4.6" evidence="1"/>
<dbReference type="EMBL" id="CP000681">
    <property type="protein sequence ID" value="ABP75862.1"/>
    <property type="molecule type" value="Genomic_DNA"/>
</dbReference>
<dbReference type="SMR" id="A4Y7C9"/>
<dbReference type="STRING" id="319224.Sputcn32_2141"/>
<dbReference type="KEGG" id="spc:Sputcn32_2141"/>
<dbReference type="eggNOG" id="COG0105">
    <property type="taxonomic scope" value="Bacteria"/>
</dbReference>
<dbReference type="HOGENOM" id="CLU_060216_8_1_6"/>
<dbReference type="GO" id="GO:0005737">
    <property type="term" value="C:cytoplasm"/>
    <property type="evidence" value="ECO:0007669"/>
    <property type="project" value="UniProtKB-SubCell"/>
</dbReference>
<dbReference type="GO" id="GO:0005524">
    <property type="term" value="F:ATP binding"/>
    <property type="evidence" value="ECO:0007669"/>
    <property type="project" value="UniProtKB-UniRule"/>
</dbReference>
<dbReference type="GO" id="GO:0046872">
    <property type="term" value="F:metal ion binding"/>
    <property type="evidence" value="ECO:0007669"/>
    <property type="project" value="UniProtKB-KW"/>
</dbReference>
<dbReference type="GO" id="GO:0004550">
    <property type="term" value="F:nucleoside diphosphate kinase activity"/>
    <property type="evidence" value="ECO:0007669"/>
    <property type="project" value="UniProtKB-UniRule"/>
</dbReference>
<dbReference type="GO" id="GO:0006241">
    <property type="term" value="P:CTP biosynthetic process"/>
    <property type="evidence" value="ECO:0007669"/>
    <property type="project" value="UniProtKB-UniRule"/>
</dbReference>
<dbReference type="GO" id="GO:0006183">
    <property type="term" value="P:GTP biosynthetic process"/>
    <property type="evidence" value="ECO:0007669"/>
    <property type="project" value="UniProtKB-UniRule"/>
</dbReference>
<dbReference type="GO" id="GO:0006228">
    <property type="term" value="P:UTP biosynthetic process"/>
    <property type="evidence" value="ECO:0007669"/>
    <property type="project" value="UniProtKB-UniRule"/>
</dbReference>
<dbReference type="CDD" id="cd04413">
    <property type="entry name" value="NDPk_I"/>
    <property type="match status" value="1"/>
</dbReference>
<dbReference type="FunFam" id="3.30.70.141:FF:000001">
    <property type="entry name" value="Nucleoside diphosphate kinase"/>
    <property type="match status" value="1"/>
</dbReference>
<dbReference type="Gene3D" id="3.30.70.141">
    <property type="entry name" value="Nucleoside diphosphate kinase-like domain"/>
    <property type="match status" value="1"/>
</dbReference>
<dbReference type="HAMAP" id="MF_00451">
    <property type="entry name" value="NDP_kinase"/>
    <property type="match status" value="1"/>
</dbReference>
<dbReference type="InterPro" id="IPR034907">
    <property type="entry name" value="NDK-like_dom"/>
</dbReference>
<dbReference type="InterPro" id="IPR036850">
    <property type="entry name" value="NDK-like_dom_sf"/>
</dbReference>
<dbReference type="InterPro" id="IPR001564">
    <property type="entry name" value="Nucleoside_diP_kinase"/>
</dbReference>
<dbReference type="InterPro" id="IPR023005">
    <property type="entry name" value="Nucleoside_diP_kinase_AS"/>
</dbReference>
<dbReference type="NCBIfam" id="NF001908">
    <property type="entry name" value="PRK00668.1"/>
    <property type="match status" value="1"/>
</dbReference>
<dbReference type="PANTHER" id="PTHR46161">
    <property type="entry name" value="NUCLEOSIDE DIPHOSPHATE KINASE"/>
    <property type="match status" value="1"/>
</dbReference>
<dbReference type="PANTHER" id="PTHR46161:SF3">
    <property type="entry name" value="NUCLEOSIDE DIPHOSPHATE KINASE DDB_G0292928-RELATED"/>
    <property type="match status" value="1"/>
</dbReference>
<dbReference type="Pfam" id="PF00334">
    <property type="entry name" value="NDK"/>
    <property type="match status" value="1"/>
</dbReference>
<dbReference type="PRINTS" id="PR01243">
    <property type="entry name" value="NUCDPKINASE"/>
</dbReference>
<dbReference type="SMART" id="SM00562">
    <property type="entry name" value="NDK"/>
    <property type="match status" value="1"/>
</dbReference>
<dbReference type="SUPFAM" id="SSF54919">
    <property type="entry name" value="Nucleoside diphosphate kinase, NDK"/>
    <property type="match status" value="1"/>
</dbReference>
<dbReference type="PROSITE" id="PS00469">
    <property type="entry name" value="NDPK"/>
    <property type="match status" value="1"/>
</dbReference>
<dbReference type="PROSITE" id="PS51374">
    <property type="entry name" value="NDPK_LIKE"/>
    <property type="match status" value="1"/>
</dbReference>
<feature type="chain" id="PRO_1000026295" description="Nucleoside diphosphate kinase">
    <location>
        <begin position="1"/>
        <end position="143"/>
    </location>
</feature>
<feature type="active site" description="Pros-phosphohistidine intermediate" evidence="1">
    <location>
        <position position="117"/>
    </location>
</feature>
<feature type="binding site" evidence="1">
    <location>
        <position position="11"/>
    </location>
    <ligand>
        <name>ATP</name>
        <dbReference type="ChEBI" id="CHEBI:30616"/>
    </ligand>
</feature>
<feature type="binding site" evidence="1">
    <location>
        <position position="59"/>
    </location>
    <ligand>
        <name>ATP</name>
        <dbReference type="ChEBI" id="CHEBI:30616"/>
    </ligand>
</feature>
<feature type="binding site" evidence="1">
    <location>
        <position position="87"/>
    </location>
    <ligand>
        <name>ATP</name>
        <dbReference type="ChEBI" id="CHEBI:30616"/>
    </ligand>
</feature>
<feature type="binding site" evidence="1">
    <location>
        <position position="93"/>
    </location>
    <ligand>
        <name>ATP</name>
        <dbReference type="ChEBI" id="CHEBI:30616"/>
    </ligand>
</feature>
<feature type="binding site" evidence="1">
    <location>
        <position position="104"/>
    </location>
    <ligand>
        <name>ATP</name>
        <dbReference type="ChEBI" id="CHEBI:30616"/>
    </ligand>
</feature>
<feature type="binding site" evidence="1">
    <location>
        <position position="114"/>
    </location>
    <ligand>
        <name>ATP</name>
        <dbReference type="ChEBI" id="CHEBI:30616"/>
    </ligand>
</feature>
<name>NDK_SHEPC</name>
<organism>
    <name type="scientific">Shewanella putrefaciens (strain CN-32 / ATCC BAA-453)</name>
    <dbReference type="NCBI Taxonomy" id="319224"/>
    <lineage>
        <taxon>Bacteria</taxon>
        <taxon>Pseudomonadati</taxon>
        <taxon>Pseudomonadota</taxon>
        <taxon>Gammaproteobacteria</taxon>
        <taxon>Alteromonadales</taxon>
        <taxon>Shewanellaceae</taxon>
        <taxon>Shewanella</taxon>
    </lineage>
</organism>
<gene>
    <name evidence="1" type="primary">ndk</name>
    <name type="ordered locus">Sputcn32_2141</name>
</gene>
<accession>A4Y7C9</accession>
<evidence type="ECO:0000255" key="1">
    <source>
        <dbReference type="HAMAP-Rule" id="MF_00451"/>
    </source>
</evidence>
<sequence length="143" mass="15454">MAIERTFSIIKPDAVAKNHIGAIYNRFETAGLKIVAAKMLHLTKEQAEGFYAEHSERGFFGALVAFMTSGPIMVQVLEGENAVLAHREILGATNPAQAAPGTIRADFAESIDENAAHGSDAVESAAREIAYFFSAEELCPRTR</sequence>
<protein>
    <recommendedName>
        <fullName evidence="1">Nucleoside diphosphate kinase</fullName>
        <shortName evidence="1">NDK</shortName>
        <shortName evidence="1">NDP kinase</shortName>
        <ecNumber evidence="1">2.7.4.6</ecNumber>
    </recommendedName>
    <alternativeName>
        <fullName evidence="1">Nucleoside-2-P kinase</fullName>
    </alternativeName>
</protein>
<keyword id="KW-0067">ATP-binding</keyword>
<keyword id="KW-0963">Cytoplasm</keyword>
<keyword id="KW-0418">Kinase</keyword>
<keyword id="KW-0460">Magnesium</keyword>
<keyword id="KW-0479">Metal-binding</keyword>
<keyword id="KW-0546">Nucleotide metabolism</keyword>
<keyword id="KW-0547">Nucleotide-binding</keyword>
<keyword id="KW-0597">Phosphoprotein</keyword>
<keyword id="KW-0808">Transferase</keyword>